<sequence>MRTIYLSLLVFIIVLALNEVMAKKHSSTPKLRRSDFPEDFIFGAATSAYQVEGAAHEDGRGPSIWDTFSEKYPEKIKDGSNGSIASDSYHLYKEDVGLLHQIGFDAYRFSISWSRILPRENLKGGINQAGIDYYNNLINELLSKGIKPFATIFHWDTPQSLEDAYGGFLGAEIVNDFRDYADICFKNFGDRVKHWMTLNEPLTVVQQGYVAGVMAPGRCSKFTNPNCTAGNGATEPYIVGHNLILAHGEAVKVYREKYKASQKGQVGIALNAGWNLPYSESAEDRLAAARAMAFTFDYFMEPLVTGKYPIDMVNYVKGGRLPTFTAKQSKMLKGSYDFIGRNYYSSSYAKDVPCSSENVTLFSDPCASVTGEREGVPIGPKAASDWLLIYPKGIRDLLLYAKYKFKDPVMYITENGRDEASTGKIDLKDSERIDYYAQHLKMVQDAISIGANVKGFFAWSLLDNFEWATGYAVRFGLVYVDFNGGRKRYPKKSAKWFKKLLNEKKKN</sequence>
<organism>
    <name type="scientific">Arabidopsis thaliana</name>
    <name type="common">Mouse-ear cress</name>
    <dbReference type="NCBI Taxonomy" id="3702"/>
    <lineage>
        <taxon>Eukaryota</taxon>
        <taxon>Viridiplantae</taxon>
        <taxon>Streptophyta</taxon>
        <taxon>Embryophyta</taxon>
        <taxon>Tracheophyta</taxon>
        <taxon>Spermatophyta</taxon>
        <taxon>Magnoliopsida</taxon>
        <taxon>eudicotyledons</taxon>
        <taxon>Gunneridae</taxon>
        <taxon>Pentapetalae</taxon>
        <taxon>rosids</taxon>
        <taxon>malvids</taxon>
        <taxon>Brassicales</taxon>
        <taxon>Brassicaceae</taxon>
        <taxon>Camelineae</taxon>
        <taxon>Arabidopsis</taxon>
    </lineage>
</organism>
<accession>Q9FH03</accession>
<dbReference type="EC" id="3.2.1.21" evidence="1"/>
<dbReference type="EMBL" id="AB023032">
    <property type="protein sequence ID" value="BAB10199.1"/>
    <property type="molecule type" value="Genomic_DNA"/>
</dbReference>
<dbReference type="EMBL" id="CP002688">
    <property type="protein sequence ID" value="AED94789.1"/>
    <property type="molecule type" value="Genomic_DNA"/>
</dbReference>
<dbReference type="EMBL" id="DQ056704">
    <property type="protein sequence ID" value="AAY78850.1"/>
    <property type="molecule type" value="mRNA"/>
</dbReference>
<dbReference type="RefSeq" id="NP_199041.1">
    <property type="nucleotide sequence ID" value="NM_123591.2"/>
</dbReference>
<dbReference type="SMR" id="Q9FH03"/>
<dbReference type="FunCoup" id="Q9FH03">
    <property type="interactions" value="448"/>
</dbReference>
<dbReference type="STRING" id="3702.Q9FH03"/>
<dbReference type="CAZy" id="GH1">
    <property type="family name" value="Glycoside Hydrolase Family 1"/>
</dbReference>
<dbReference type="GlyCosmos" id="Q9FH03">
    <property type="glycosylation" value="3 sites, No reported glycans"/>
</dbReference>
<dbReference type="GlyGen" id="Q9FH03">
    <property type="glycosylation" value="3 sites"/>
</dbReference>
<dbReference type="PaxDb" id="3702-AT5G42260.1"/>
<dbReference type="EnsemblPlants" id="AT5G42260.1">
    <property type="protein sequence ID" value="AT5G42260.1"/>
    <property type="gene ID" value="AT5G42260"/>
</dbReference>
<dbReference type="GeneID" id="834231"/>
<dbReference type="Gramene" id="AT5G42260.1">
    <property type="protein sequence ID" value="AT5G42260.1"/>
    <property type="gene ID" value="AT5G42260"/>
</dbReference>
<dbReference type="KEGG" id="ath:AT5G42260"/>
<dbReference type="Araport" id="AT5G42260"/>
<dbReference type="TAIR" id="AT5G42260">
    <property type="gene designation" value="BGLU12"/>
</dbReference>
<dbReference type="eggNOG" id="KOG0626">
    <property type="taxonomic scope" value="Eukaryota"/>
</dbReference>
<dbReference type="HOGENOM" id="CLU_001859_1_0_1"/>
<dbReference type="InParanoid" id="Q9FH03"/>
<dbReference type="OMA" id="SALWFKL"/>
<dbReference type="PhylomeDB" id="Q9FH03"/>
<dbReference type="BioCyc" id="ARA:AT5G42260-MONOMER"/>
<dbReference type="PRO" id="PR:Q9FH03"/>
<dbReference type="Proteomes" id="UP000006548">
    <property type="component" value="Chromosome 5"/>
</dbReference>
<dbReference type="GO" id="GO:0005794">
    <property type="term" value="C:Golgi apparatus"/>
    <property type="evidence" value="ECO:0007005"/>
    <property type="project" value="TAIR"/>
</dbReference>
<dbReference type="GO" id="GO:0008422">
    <property type="term" value="F:beta-glucosidase activity"/>
    <property type="evidence" value="ECO:0007669"/>
    <property type="project" value="UniProtKB-EC"/>
</dbReference>
<dbReference type="GO" id="GO:0005975">
    <property type="term" value="P:carbohydrate metabolic process"/>
    <property type="evidence" value="ECO:0007669"/>
    <property type="project" value="InterPro"/>
</dbReference>
<dbReference type="FunFam" id="3.20.20.80:FF:000022">
    <property type="entry name" value="Beta-glucosidase 11"/>
    <property type="match status" value="1"/>
</dbReference>
<dbReference type="Gene3D" id="3.20.20.80">
    <property type="entry name" value="Glycosidases"/>
    <property type="match status" value="1"/>
</dbReference>
<dbReference type="InterPro" id="IPR001360">
    <property type="entry name" value="Glyco_hydro_1"/>
</dbReference>
<dbReference type="InterPro" id="IPR033132">
    <property type="entry name" value="Glyco_hydro_1_N_CS"/>
</dbReference>
<dbReference type="InterPro" id="IPR017853">
    <property type="entry name" value="Glycoside_hydrolase_SF"/>
</dbReference>
<dbReference type="PANTHER" id="PTHR10353:SF237">
    <property type="entry name" value="BETA-GLUCOSIDASE 12-RELATED"/>
    <property type="match status" value="1"/>
</dbReference>
<dbReference type="PANTHER" id="PTHR10353">
    <property type="entry name" value="GLYCOSYL HYDROLASE"/>
    <property type="match status" value="1"/>
</dbReference>
<dbReference type="Pfam" id="PF00232">
    <property type="entry name" value="Glyco_hydro_1"/>
    <property type="match status" value="1"/>
</dbReference>
<dbReference type="PRINTS" id="PR00131">
    <property type="entry name" value="GLHYDRLASE1"/>
</dbReference>
<dbReference type="SUPFAM" id="SSF51445">
    <property type="entry name" value="(Trans)glycosidases"/>
    <property type="match status" value="1"/>
</dbReference>
<dbReference type="PROSITE" id="PS00653">
    <property type="entry name" value="GLYCOSYL_HYDROL_F1_2"/>
    <property type="match status" value="1"/>
</dbReference>
<reference key="1">
    <citation type="journal article" date="2000" name="DNA Res.">
        <title>Structural analysis of Arabidopsis thaliana chromosome 5. X. Sequence features of the regions of 3,076,755 bp covered by sixty P1 and TAC clones.</title>
        <authorList>
            <person name="Sato S."/>
            <person name="Nakamura Y."/>
            <person name="Kaneko T."/>
            <person name="Katoh T."/>
            <person name="Asamizu E."/>
            <person name="Kotani H."/>
            <person name="Tabata S."/>
        </authorList>
    </citation>
    <scope>NUCLEOTIDE SEQUENCE [LARGE SCALE GENOMIC DNA]</scope>
    <source>
        <strain>cv. Columbia</strain>
    </source>
</reference>
<reference key="2">
    <citation type="journal article" date="2017" name="Plant J.">
        <title>Araport11: a complete reannotation of the Arabidopsis thaliana reference genome.</title>
        <authorList>
            <person name="Cheng C.Y."/>
            <person name="Krishnakumar V."/>
            <person name="Chan A.P."/>
            <person name="Thibaud-Nissen F."/>
            <person name="Schobel S."/>
            <person name="Town C.D."/>
        </authorList>
    </citation>
    <scope>GENOME REANNOTATION</scope>
    <source>
        <strain>cv. Columbia</strain>
    </source>
</reference>
<reference key="3">
    <citation type="submission" date="2005-05" db="EMBL/GenBank/DDBJ databases">
        <authorList>
            <person name="Underwood B.A."/>
            <person name="Xiao Y.-L."/>
            <person name="Moskal W.A. Jr."/>
            <person name="Monaghan E.L."/>
            <person name="Wang W."/>
            <person name="Redman J.C."/>
            <person name="Wu H.C."/>
            <person name="Utterback T."/>
            <person name="Town C.D."/>
        </authorList>
    </citation>
    <scope>NUCLEOTIDE SEQUENCE [LARGE SCALE MRNA]</scope>
    <source>
        <strain>cv. Columbia</strain>
    </source>
</reference>
<reference key="4">
    <citation type="journal article" date="2004" name="Plant Mol. Biol.">
        <title>Functional genomic analysis of Arabidopsis thaliana glycoside hydrolase family 1.</title>
        <authorList>
            <person name="Xu Z."/>
            <person name="Escamilla-Trevino L.L."/>
            <person name="Zeng L."/>
            <person name="Lalgondar M."/>
            <person name="Bevan D.R."/>
            <person name="Winkel B.S.J."/>
            <person name="Mohamed A."/>
            <person name="Cheng C.-L."/>
            <person name="Shih M.-C."/>
            <person name="Poulton J.E."/>
            <person name="Esen A."/>
        </authorList>
    </citation>
    <scope>GENE FAMILY</scope>
    <scope>NOMENCLATURE</scope>
</reference>
<comment type="catalytic activity">
    <reaction evidence="1">
        <text>Hydrolysis of terminal, non-reducing beta-D-glucosyl residues with release of beta-D-glucose.</text>
        <dbReference type="EC" id="3.2.1.21"/>
    </reaction>
</comment>
<comment type="similarity">
    <text evidence="8">Belongs to the glycosyl hydrolase 1 family.</text>
</comment>
<feature type="signal peptide" evidence="5">
    <location>
        <begin position="1"/>
        <end position="22"/>
    </location>
</feature>
<feature type="chain" id="PRO_0000389575" description="Beta-glucosidase 12">
    <location>
        <begin position="23"/>
        <end position="507"/>
    </location>
</feature>
<feature type="active site" description="Proton donor" evidence="3">
    <location>
        <position position="200"/>
    </location>
</feature>
<feature type="active site" description="Nucleophile" evidence="3">
    <location>
        <position position="414"/>
    </location>
</feature>
<feature type="binding site" evidence="3">
    <location>
        <position position="50"/>
    </location>
    <ligand>
        <name>a beta-D-glucoside</name>
        <dbReference type="ChEBI" id="CHEBI:22798"/>
    </ligand>
</feature>
<feature type="binding site" evidence="3">
    <location>
        <position position="154"/>
    </location>
    <ligand>
        <name>a beta-D-glucoside</name>
        <dbReference type="ChEBI" id="CHEBI:22798"/>
    </ligand>
</feature>
<feature type="binding site" evidence="3">
    <location>
        <begin position="199"/>
        <end position="200"/>
    </location>
    <ligand>
        <name>a beta-D-glucoside</name>
        <dbReference type="ChEBI" id="CHEBI:22798"/>
    </ligand>
</feature>
<feature type="binding site" evidence="3">
    <location>
        <position position="344"/>
    </location>
    <ligand>
        <name>a beta-D-glucoside</name>
        <dbReference type="ChEBI" id="CHEBI:22798"/>
    </ligand>
</feature>
<feature type="binding site" evidence="4">
    <location>
        <position position="414"/>
    </location>
    <ligand>
        <name>a beta-D-glucoside</name>
        <dbReference type="ChEBI" id="CHEBI:22798"/>
    </ligand>
</feature>
<feature type="binding site" evidence="3">
    <location>
        <position position="459"/>
    </location>
    <ligand>
        <name>a beta-D-glucoside</name>
        <dbReference type="ChEBI" id="CHEBI:22798"/>
    </ligand>
</feature>
<feature type="binding site" evidence="3">
    <location>
        <begin position="466"/>
        <end position="467"/>
    </location>
    <ligand>
        <name>a beta-D-glucoside</name>
        <dbReference type="ChEBI" id="CHEBI:22798"/>
    </ligand>
</feature>
<feature type="binding site" evidence="2">
    <location>
        <position position="475"/>
    </location>
    <ligand>
        <name>a beta-D-glucoside</name>
        <dbReference type="ChEBI" id="CHEBI:22798"/>
    </ligand>
</feature>
<feature type="glycosylation site" description="N-linked (GlcNAc...) asparagine" evidence="6">
    <location>
        <position position="81"/>
    </location>
</feature>
<feature type="glycosylation site" description="N-linked (GlcNAc...) asparagine" evidence="6">
    <location>
        <position position="226"/>
    </location>
</feature>
<feature type="glycosylation site" description="N-linked (GlcNAc...) asparagine" evidence="6">
    <location>
        <position position="358"/>
    </location>
</feature>
<feature type="disulfide bond" evidence="3">
    <location>
        <begin position="219"/>
        <end position="227"/>
    </location>
</feature>
<protein>
    <recommendedName>
        <fullName evidence="7">Beta-glucosidase 12</fullName>
        <shortName evidence="7">AtBGLU12</shortName>
        <ecNumber evidence="1">3.2.1.21</ecNumber>
    </recommendedName>
</protein>
<gene>
    <name evidence="7" type="primary">BGLU12</name>
    <name evidence="9" type="ordered locus">At5g42260</name>
    <name evidence="10" type="ORF">K5J14.7</name>
</gene>
<name>BGL12_ARATH</name>
<evidence type="ECO:0000250" key="1">
    <source>
        <dbReference type="UniProtKB" id="O64879"/>
    </source>
</evidence>
<evidence type="ECO:0000250" key="2">
    <source>
        <dbReference type="UniProtKB" id="Q1XH05"/>
    </source>
</evidence>
<evidence type="ECO:0000250" key="3">
    <source>
        <dbReference type="UniProtKB" id="Q7XSK0"/>
    </source>
</evidence>
<evidence type="ECO:0000250" key="4">
    <source>
        <dbReference type="UniProtKB" id="Q9SPP9"/>
    </source>
</evidence>
<evidence type="ECO:0000255" key="5"/>
<evidence type="ECO:0000255" key="6">
    <source>
        <dbReference type="PROSITE-ProRule" id="PRU00498"/>
    </source>
</evidence>
<evidence type="ECO:0000303" key="7">
    <source>
    </source>
</evidence>
<evidence type="ECO:0000305" key="8"/>
<evidence type="ECO:0000312" key="9">
    <source>
        <dbReference type="Araport" id="AT5G42260"/>
    </source>
</evidence>
<evidence type="ECO:0000312" key="10">
    <source>
        <dbReference type="EMBL" id="BAB10199.1"/>
    </source>
</evidence>
<keyword id="KW-1015">Disulfide bond</keyword>
<keyword id="KW-0325">Glycoprotein</keyword>
<keyword id="KW-0326">Glycosidase</keyword>
<keyword id="KW-0378">Hydrolase</keyword>
<keyword id="KW-1185">Reference proteome</keyword>
<keyword id="KW-0732">Signal</keyword>
<proteinExistence type="evidence at transcript level"/>